<evidence type="ECO:0000305" key="1"/>
<name>RL30_MAIZE</name>
<gene>
    <name type="primary">RPL30</name>
</gene>
<keyword id="KW-1185">Reference proteome</keyword>
<keyword id="KW-0687">Ribonucleoprotein</keyword>
<keyword id="KW-0689">Ribosomal protein</keyword>
<organism>
    <name type="scientific">Zea mays</name>
    <name type="common">Maize</name>
    <dbReference type="NCBI Taxonomy" id="4577"/>
    <lineage>
        <taxon>Eukaryota</taxon>
        <taxon>Viridiplantae</taxon>
        <taxon>Streptophyta</taxon>
        <taxon>Embryophyta</taxon>
        <taxon>Tracheophyta</taxon>
        <taxon>Spermatophyta</taxon>
        <taxon>Magnoliopsida</taxon>
        <taxon>Liliopsida</taxon>
        <taxon>Poales</taxon>
        <taxon>Poaceae</taxon>
        <taxon>PACMAD clade</taxon>
        <taxon>Panicoideae</taxon>
        <taxon>Andropogonodae</taxon>
        <taxon>Andropogoneae</taxon>
        <taxon>Tripsacinae</taxon>
        <taxon>Zea</taxon>
    </lineage>
</organism>
<reference key="1">
    <citation type="submission" date="1997-11" db="EMBL/GenBank/DDBJ databases">
        <authorList>
            <person name="Ahluwalia K.K."/>
            <person name="Baysdorfer C."/>
        </authorList>
    </citation>
    <scope>NUCLEOTIDE SEQUENCE [MRNA]</scope>
    <source>
        <strain>cv. B73</strain>
    </source>
</reference>
<accession>O48558</accession>
<dbReference type="EMBL" id="AF034949">
    <property type="protein sequence ID" value="AAB88620.1"/>
    <property type="molecule type" value="mRNA"/>
</dbReference>
<dbReference type="PIR" id="T01411">
    <property type="entry name" value="T01411"/>
</dbReference>
<dbReference type="RefSeq" id="NP_001104891.1">
    <property type="nucleotide sequence ID" value="NM_001111421.1"/>
</dbReference>
<dbReference type="SMR" id="O48558"/>
<dbReference type="FunCoup" id="O48558">
    <property type="interactions" value="2934"/>
</dbReference>
<dbReference type="STRING" id="4577.O48558"/>
<dbReference type="PaxDb" id="4577-GRMZM2G027728_P01"/>
<dbReference type="EnsemblPlants" id="Zm00001eb332790_T001">
    <property type="protein sequence ID" value="Zm00001eb332790_P001"/>
    <property type="gene ID" value="Zm00001eb332790"/>
</dbReference>
<dbReference type="GeneID" id="541668"/>
<dbReference type="Gramene" id="Zm00001eb332790_T001">
    <property type="protein sequence ID" value="Zm00001eb332790_P001"/>
    <property type="gene ID" value="Zm00001eb332790"/>
</dbReference>
<dbReference type="KEGG" id="zma:541668"/>
<dbReference type="eggNOG" id="KOG2988">
    <property type="taxonomic scope" value="Eukaryota"/>
</dbReference>
<dbReference type="HOGENOM" id="CLU_130502_0_1_1"/>
<dbReference type="InParanoid" id="O48558"/>
<dbReference type="OMA" id="RSMPEQP"/>
<dbReference type="OrthoDB" id="727327at2759"/>
<dbReference type="Proteomes" id="UP000007305">
    <property type="component" value="Chromosome 8"/>
</dbReference>
<dbReference type="ExpressionAtlas" id="O48558">
    <property type="expression patterns" value="baseline and differential"/>
</dbReference>
<dbReference type="GO" id="GO:0022625">
    <property type="term" value="C:cytosolic large ribosomal subunit"/>
    <property type="evidence" value="ECO:0000318"/>
    <property type="project" value="GO_Central"/>
</dbReference>
<dbReference type="GO" id="GO:0003723">
    <property type="term" value="F:RNA binding"/>
    <property type="evidence" value="ECO:0000318"/>
    <property type="project" value="GO_Central"/>
</dbReference>
<dbReference type="GO" id="GO:0003735">
    <property type="term" value="F:structural constituent of ribosome"/>
    <property type="evidence" value="ECO:0000318"/>
    <property type="project" value="GO_Central"/>
</dbReference>
<dbReference type="FunFam" id="3.30.1330.30:FF:000001">
    <property type="entry name" value="60S ribosomal protein L30"/>
    <property type="match status" value="1"/>
</dbReference>
<dbReference type="Gene3D" id="3.30.1330.30">
    <property type="match status" value="1"/>
</dbReference>
<dbReference type="HAMAP" id="MF_00481">
    <property type="entry name" value="Ribosomal_eL30"/>
    <property type="match status" value="1"/>
</dbReference>
<dbReference type="InterPro" id="IPR000231">
    <property type="entry name" value="Ribosomal_eL30"/>
</dbReference>
<dbReference type="InterPro" id="IPR039109">
    <property type="entry name" value="Ribosomal_eL30-like"/>
</dbReference>
<dbReference type="InterPro" id="IPR029064">
    <property type="entry name" value="Ribosomal_eL30-like_sf"/>
</dbReference>
<dbReference type="InterPro" id="IPR022991">
    <property type="entry name" value="Ribosomal_eL30_CS"/>
</dbReference>
<dbReference type="InterPro" id="IPR004038">
    <property type="entry name" value="Ribosomal_eL8/eL30/eS12/Gad45"/>
</dbReference>
<dbReference type="NCBIfam" id="NF002172">
    <property type="entry name" value="PRK01018.1"/>
    <property type="match status" value="1"/>
</dbReference>
<dbReference type="PANTHER" id="PTHR11449">
    <property type="entry name" value="RIBOSOMAL PROTEIN L30"/>
    <property type="match status" value="1"/>
</dbReference>
<dbReference type="Pfam" id="PF01248">
    <property type="entry name" value="Ribosomal_L7Ae"/>
    <property type="match status" value="1"/>
</dbReference>
<dbReference type="SUPFAM" id="SSF55315">
    <property type="entry name" value="L30e-like"/>
    <property type="match status" value="1"/>
</dbReference>
<dbReference type="PROSITE" id="PS00709">
    <property type="entry name" value="RIBOSOMAL_L30E_1"/>
    <property type="match status" value="1"/>
</dbReference>
<dbReference type="PROSITE" id="PS00993">
    <property type="entry name" value="RIBOSOMAL_L30E_2"/>
    <property type="match status" value="1"/>
</dbReference>
<proteinExistence type="inferred from homology"/>
<feature type="chain" id="PRO_0000146135" description="Large ribosomal subunit protein eL30">
    <location>
        <begin position="1"/>
        <end position="112"/>
    </location>
</feature>
<protein>
    <recommendedName>
        <fullName evidence="1">Large ribosomal subunit protein eL30</fullName>
    </recommendedName>
    <alternativeName>
        <fullName>60S ribosomal protein L30</fullName>
    </alternativeName>
</protein>
<comment type="similarity">
    <text evidence="1">Belongs to the eukaryotic ribosomal protein eL30 family.</text>
</comment>
<sequence>MVATKKTKKSTDNINNKLQLVMKSGKYTLGYKTVLRTLRNSKSKLVIIANNCPPLRKSEIEYYAMLAKVTVHHFHGNNVDLGTACGKYFRVCCLSIIDPGDSDIIKTTPGEQ</sequence>